<feature type="chain" id="PRO_1000203575" description="Phosphoserine aminotransferase">
    <location>
        <begin position="1"/>
        <end position="363"/>
    </location>
</feature>
<feature type="binding site" evidence="1">
    <location>
        <position position="42"/>
    </location>
    <ligand>
        <name>L-glutamate</name>
        <dbReference type="ChEBI" id="CHEBI:29985"/>
    </ligand>
</feature>
<feature type="binding site" evidence="1">
    <location>
        <begin position="76"/>
        <end position="77"/>
    </location>
    <ligand>
        <name>pyridoxal 5'-phosphate</name>
        <dbReference type="ChEBI" id="CHEBI:597326"/>
    </ligand>
</feature>
<feature type="binding site" evidence="1">
    <location>
        <position position="102"/>
    </location>
    <ligand>
        <name>pyridoxal 5'-phosphate</name>
        <dbReference type="ChEBI" id="CHEBI:597326"/>
    </ligand>
</feature>
<feature type="binding site" evidence="1">
    <location>
        <position position="156"/>
    </location>
    <ligand>
        <name>pyridoxal 5'-phosphate</name>
        <dbReference type="ChEBI" id="CHEBI:597326"/>
    </ligand>
</feature>
<feature type="binding site" evidence="1">
    <location>
        <position position="175"/>
    </location>
    <ligand>
        <name>pyridoxal 5'-phosphate</name>
        <dbReference type="ChEBI" id="CHEBI:597326"/>
    </ligand>
</feature>
<feature type="binding site" evidence="1">
    <location>
        <position position="198"/>
    </location>
    <ligand>
        <name>pyridoxal 5'-phosphate</name>
        <dbReference type="ChEBI" id="CHEBI:597326"/>
    </ligand>
</feature>
<feature type="binding site" evidence="1">
    <location>
        <begin position="240"/>
        <end position="241"/>
    </location>
    <ligand>
        <name>pyridoxal 5'-phosphate</name>
        <dbReference type="ChEBI" id="CHEBI:597326"/>
    </ligand>
</feature>
<feature type="modified residue" description="N6-(pyridoxal phosphate)lysine" evidence="1">
    <location>
        <position position="199"/>
    </location>
</feature>
<accession>Q0HV09</accession>
<sequence length="363" mass="39625">MSAIYNFCAGPAMLPAAVMKKAQQELLDWNGLGVSVMEVSHRGKEFIALTKQAEADLRELMHIPQNYHVLFMHGGGRGQFSAVVNNFLGNQGRALYLVSGQWSSAALAEAQKLAGDAQIDSLNIVEKQNGLNAVVLPDLHKIDADYRYVHYCPNETVDGIEIFDELDSPWPIVADLSSTIMSREIDVSRYGLIYAGAQKNIGPSGLSIVIVRDDMLKLPSLTQSSIMDYRLAVEHDSMFNTPPTFAWYLAAEVFAWLKSLGGVASIAKINQQKAQMLYACIDANPFYKNGVVAANRSQMNVTFQLADESLDGAFLKEAEAASLVALKGHRIVGGMRASLYNAMPLEGVAALVSFMNEFAAKHS</sequence>
<gene>
    <name evidence="1" type="primary">serC</name>
    <name type="ordered locus">Shewmr7_2058</name>
</gene>
<keyword id="KW-0028">Amino-acid biosynthesis</keyword>
<keyword id="KW-0032">Aminotransferase</keyword>
<keyword id="KW-0963">Cytoplasm</keyword>
<keyword id="KW-0663">Pyridoxal phosphate</keyword>
<keyword id="KW-0664">Pyridoxine biosynthesis</keyword>
<keyword id="KW-0718">Serine biosynthesis</keyword>
<keyword id="KW-0808">Transferase</keyword>
<evidence type="ECO:0000255" key="1">
    <source>
        <dbReference type="HAMAP-Rule" id="MF_00160"/>
    </source>
</evidence>
<dbReference type="EC" id="2.6.1.52" evidence="1"/>
<dbReference type="EMBL" id="CP000444">
    <property type="protein sequence ID" value="ABI43046.1"/>
    <property type="molecule type" value="Genomic_DNA"/>
</dbReference>
<dbReference type="SMR" id="Q0HV09"/>
<dbReference type="KEGG" id="shm:Shewmr7_2058"/>
<dbReference type="HOGENOM" id="CLU_034866_0_2_6"/>
<dbReference type="UniPathway" id="UPA00135">
    <property type="reaction ID" value="UER00197"/>
</dbReference>
<dbReference type="UniPathway" id="UPA00244">
    <property type="reaction ID" value="UER00311"/>
</dbReference>
<dbReference type="GO" id="GO:0005737">
    <property type="term" value="C:cytoplasm"/>
    <property type="evidence" value="ECO:0007669"/>
    <property type="project" value="UniProtKB-SubCell"/>
</dbReference>
<dbReference type="GO" id="GO:0004648">
    <property type="term" value="F:O-phospho-L-serine:2-oxoglutarate aminotransferase activity"/>
    <property type="evidence" value="ECO:0007669"/>
    <property type="project" value="UniProtKB-UniRule"/>
</dbReference>
<dbReference type="GO" id="GO:0030170">
    <property type="term" value="F:pyridoxal phosphate binding"/>
    <property type="evidence" value="ECO:0007669"/>
    <property type="project" value="UniProtKB-UniRule"/>
</dbReference>
<dbReference type="GO" id="GO:0006564">
    <property type="term" value="P:L-serine biosynthetic process"/>
    <property type="evidence" value="ECO:0007669"/>
    <property type="project" value="UniProtKB-UniRule"/>
</dbReference>
<dbReference type="GO" id="GO:0008615">
    <property type="term" value="P:pyridoxine biosynthetic process"/>
    <property type="evidence" value="ECO:0007669"/>
    <property type="project" value="UniProtKB-UniRule"/>
</dbReference>
<dbReference type="FunFam" id="3.40.640.10:FF:000010">
    <property type="entry name" value="Phosphoserine aminotransferase"/>
    <property type="match status" value="1"/>
</dbReference>
<dbReference type="FunFam" id="3.90.1150.10:FF:000006">
    <property type="entry name" value="Phosphoserine aminotransferase"/>
    <property type="match status" value="1"/>
</dbReference>
<dbReference type="Gene3D" id="3.90.1150.10">
    <property type="entry name" value="Aspartate Aminotransferase, domain 1"/>
    <property type="match status" value="1"/>
</dbReference>
<dbReference type="Gene3D" id="3.40.640.10">
    <property type="entry name" value="Type I PLP-dependent aspartate aminotransferase-like (Major domain)"/>
    <property type="match status" value="1"/>
</dbReference>
<dbReference type="HAMAP" id="MF_00160">
    <property type="entry name" value="SerC_aminotrans_5"/>
    <property type="match status" value="1"/>
</dbReference>
<dbReference type="InterPro" id="IPR000192">
    <property type="entry name" value="Aminotrans_V_dom"/>
</dbReference>
<dbReference type="InterPro" id="IPR020578">
    <property type="entry name" value="Aminotrans_V_PyrdxlP_BS"/>
</dbReference>
<dbReference type="InterPro" id="IPR022278">
    <property type="entry name" value="Pser_aminoTfrase"/>
</dbReference>
<dbReference type="InterPro" id="IPR015424">
    <property type="entry name" value="PyrdxlP-dep_Trfase"/>
</dbReference>
<dbReference type="InterPro" id="IPR015421">
    <property type="entry name" value="PyrdxlP-dep_Trfase_major"/>
</dbReference>
<dbReference type="InterPro" id="IPR015422">
    <property type="entry name" value="PyrdxlP-dep_Trfase_small"/>
</dbReference>
<dbReference type="NCBIfam" id="NF003764">
    <property type="entry name" value="PRK05355.1"/>
    <property type="match status" value="1"/>
</dbReference>
<dbReference type="NCBIfam" id="TIGR01364">
    <property type="entry name" value="serC_1"/>
    <property type="match status" value="1"/>
</dbReference>
<dbReference type="PANTHER" id="PTHR43247">
    <property type="entry name" value="PHOSPHOSERINE AMINOTRANSFERASE"/>
    <property type="match status" value="1"/>
</dbReference>
<dbReference type="PANTHER" id="PTHR43247:SF1">
    <property type="entry name" value="PHOSPHOSERINE AMINOTRANSFERASE"/>
    <property type="match status" value="1"/>
</dbReference>
<dbReference type="Pfam" id="PF00266">
    <property type="entry name" value="Aminotran_5"/>
    <property type="match status" value="1"/>
</dbReference>
<dbReference type="PIRSF" id="PIRSF000525">
    <property type="entry name" value="SerC"/>
    <property type="match status" value="1"/>
</dbReference>
<dbReference type="SUPFAM" id="SSF53383">
    <property type="entry name" value="PLP-dependent transferases"/>
    <property type="match status" value="1"/>
</dbReference>
<dbReference type="PROSITE" id="PS00595">
    <property type="entry name" value="AA_TRANSFER_CLASS_5"/>
    <property type="match status" value="1"/>
</dbReference>
<organism>
    <name type="scientific">Shewanella sp. (strain MR-7)</name>
    <dbReference type="NCBI Taxonomy" id="60481"/>
    <lineage>
        <taxon>Bacteria</taxon>
        <taxon>Pseudomonadati</taxon>
        <taxon>Pseudomonadota</taxon>
        <taxon>Gammaproteobacteria</taxon>
        <taxon>Alteromonadales</taxon>
        <taxon>Shewanellaceae</taxon>
        <taxon>Shewanella</taxon>
    </lineage>
</organism>
<proteinExistence type="inferred from homology"/>
<protein>
    <recommendedName>
        <fullName evidence="1">Phosphoserine aminotransferase</fullName>
        <ecNumber evidence="1">2.6.1.52</ecNumber>
    </recommendedName>
    <alternativeName>
        <fullName evidence="1">Phosphohydroxythreonine aminotransferase</fullName>
        <shortName evidence="1">PSAT</shortName>
    </alternativeName>
</protein>
<comment type="function">
    <text evidence="1">Catalyzes the reversible conversion of 3-phosphohydroxypyruvate to phosphoserine and of 3-hydroxy-2-oxo-4-phosphonooxybutanoate to phosphohydroxythreonine.</text>
</comment>
<comment type="catalytic activity">
    <reaction evidence="1">
        <text>O-phospho-L-serine + 2-oxoglutarate = 3-phosphooxypyruvate + L-glutamate</text>
        <dbReference type="Rhea" id="RHEA:14329"/>
        <dbReference type="ChEBI" id="CHEBI:16810"/>
        <dbReference type="ChEBI" id="CHEBI:18110"/>
        <dbReference type="ChEBI" id="CHEBI:29985"/>
        <dbReference type="ChEBI" id="CHEBI:57524"/>
        <dbReference type="EC" id="2.6.1.52"/>
    </reaction>
</comment>
<comment type="catalytic activity">
    <reaction evidence="1">
        <text>4-(phosphooxy)-L-threonine + 2-oxoglutarate = (R)-3-hydroxy-2-oxo-4-phosphooxybutanoate + L-glutamate</text>
        <dbReference type="Rhea" id="RHEA:16573"/>
        <dbReference type="ChEBI" id="CHEBI:16810"/>
        <dbReference type="ChEBI" id="CHEBI:29985"/>
        <dbReference type="ChEBI" id="CHEBI:58452"/>
        <dbReference type="ChEBI" id="CHEBI:58538"/>
        <dbReference type="EC" id="2.6.1.52"/>
    </reaction>
</comment>
<comment type="cofactor">
    <cofactor evidence="1">
        <name>pyridoxal 5'-phosphate</name>
        <dbReference type="ChEBI" id="CHEBI:597326"/>
    </cofactor>
    <text evidence="1">Binds 1 pyridoxal phosphate per subunit.</text>
</comment>
<comment type="pathway">
    <text evidence="1">Amino-acid biosynthesis; L-serine biosynthesis; L-serine from 3-phospho-D-glycerate: step 2/3.</text>
</comment>
<comment type="pathway">
    <text evidence="1">Cofactor biosynthesis; pyridoxine 5'-phosphate biosynthesis; pyridoxine 5'-phosphate from D-erythrose 4-phosphate: step 3/5.</text>
</comment>
<comment type="subunit">
    <text evidence="1">Homodimer.</text>
</comment>
<comment type="subcellular location">
    <subcellularLocation>
        <location evidence="1">Cytoplasm</location>
    </subcellularLocation>
</comment>
<comment type="similarity">
    <text evidence="1">Belongs to the class-V pyridoxal-phosphate-dependent aminotransferase family. SerC subfamily.</text>
</comment>
<reference key="1">
    <citation type="submission" date="2006-08" db="EMBL/GenBank/DDBJ databases">
        <title>Complete sequence of chromosome 1 of Shewanella sp. MR-7.</title>
        <authorList>
            <person name="Copeland A."/>
            <person name="Lucas S."/>
            <person name="Lapidus A."/>
            <person name="Barry K."/>
            <person name="Detter J.C."/>
            <person name="Glavina del Rio T."/>
            <person name="Hammon N."/>
            <person name="Israni S."/>
            <person name="Dalin E."/>
            <person name="Tice H."/>
            <person name="Pitluck S."/>
            <person name="Kiss H."/>
            <person name="Brettin T."/>
            <person name="Bruce D."/>
            <person name="Han C."/>
            <person name="Tapia R."/>
            <person name="Gilna P."/>
            <person name="Schmutz J."/>
            <person name="Larimer F."/>
            <person name="Land M."/>
            <person name="Hauser L."/>
            <person name="Kyrpides N."/>
            <person name="Mikhailova N."/>
            <person name="Nealson K."/>
            <person name="Konstantinidis K."/>
            <person name="Klappenbach J."/>
            <person name="Tiedje J."/>
            <person name="Richardson P."/>
        </authorList>
    </citation>
    <scope>NUCLEOTIDE SEQUENCE [LARGE SCALE GENOMIC DNA]</scope>
    <source>
        <strain>MR-7</strain>
    </source>
</reference>
<name>SERC_SHESR</name>